<evidence type="ECO:0000255" key="1">
    <source>
        <dbReference type="PROSITE-ProRule" id="PRU00352"/>
    </source>
</evidence>
<evidence type="ECO:0000305" key="2"/>
<sequence>MIYLYTADNVIPKDGLQGAFVDKDGTYDKVYILFTVTIGSKRIVKIPYIAQMCLNDECGPSSLSSHRWSTLLKVELECDIDGRSYSQINHSKTIKQIMIRYYMYSLIVLFQVRIMYLFYEYH</sequence>
<keyword id="KW-1185">Reference proteome</keyword>
<feature type="chain" id="PRO_0000412613" description="Semaphorin-like protein A43">
    <location>
        <begin position="1"/>
        <end position="122"/>
    </location>
</feature>
<feature type="domain" description="Sema" evidence="1">
    <location>
        <begin position="1"/>
        <end position="122"/>
    </location>
</feature>
<dbReference type="EMBL" id="X69198">
    <property type="protein sequence ID" value="CAA49090.1"/>
    <property type="molecule type" value="Genomic_DNA"/>
</dbReference>
<dbReference type="RefSeq" id="NP_042193.1">
    <property type="nucleotide sequence ID" value="NC_001611.1"/>
</dbReference>
<dbReference type="SMR" id="Q76QZ8"/>
<dbReference type="GeneID" id="1486524"/>
<dbReference type="KEGG" id="vg:1486524"/>
<dbReference type="Proteomes" id="UP000002060">
    <property type="component" value="Segment"/>
</dbReference>
<dbReference type="Gene3D" id="2.130.10.10">
    <property type="entry name" value="YVTN repeat-like/Quinoprotein amine dehydrogenase"/>
    <property type="match status" value="1"/>
</dbReference>
<dbReference type="InterPro" id="IPR001627">
    <property type="entry name" value="Semap_dom"/>
</dbReference>
<dbReference type="InterPro" id="IPR036352">
    <property type="entry name" value="Semap_dom_sf"/>
</dbReference>
<dbReference type="InterPro" id="IPR015943">
    <property type="entry name" value="WD40/YVTN_repeat-like_dom_sf"/>
</dbReference>
<dbReference type="SUPFAM" id="SSF101912">
    <property type="entry name" value="Sema domain"/>
    <property type="match status" value="1"/>
</dbReference>
<dbReference type="PROSITE" id="PS51004">
    <property type="entry name" value="SEMA"/>
    <property type="match status" value="1"/>
</dbReference>
<organismHost>
    <name type="scientific">Homo sapiens</name>
    <name type="common">Human</name>
    <dbReference type="NCBI Taxonomy" id="9606"/>
</organismHost>
<accession>Q76QZ8</accession>
<gene>
    <name type="primary">A43R</name>
</gene>
<name>SEMA_VAR67</name>
<proteinExistence type="inferred from homology"/>
<comment type="miscellaneous">
    <text>Variola virus encodes a likely non-functional truncated version of the semaphorin-like protein.</text>
</comment>
<comment type="similarity">
    <text evidence="2">Belongs to the semaphorin family.</text>
</comment>
<reference key="1">
    <citation type="journal article" date="1993" name="FEBS Lett.">
        <title>Genes of variola and vaccinia viruses necessary to overcome the host protective mechanisms.</title>
        <authorList>
            <person name="Shchelkunov S.N."/>
            <person name="Blinov V.M."/>
            <person name="Sandakhchiev L.S."/>
        </authorList>
    </citation>
    <scope>NUCLEOTIDE SEQUENCE [GENOMIC DNA]</scope>
</reference>
<reference key="2">
    <citation type="journal article" date="1994" name="Virus Res.">
        <title>Analysis of the nucleotide sequence of 53 kbp from the right terminus of the genome of variola major virus strain India-1967.</title>
        <authorList>
            <person name="Shchelkunov S.N."/>
            <person name="Blinov V.M."/>
            <person name="Resenchuk S.M."/>
            <person name="Totmenin A.V."/>
            <person name="Olenina L.V."/>
            <person name="Chirikova G.B."/>
            <person name="Sandakhchiev L.S."/>
        </authorList>
    </citation>
    <scope>NUCLEOTIDE SEQUENCE [GENOMIC DNA]</scope>
</reference>
<reference key="3">
    <citation type="journal article" date="1995" name="Virus Genes">
        <title>Two types of deletions in orthopoxvirus genomes.</title>
        <authorList>
            <person name="Shchelkunov S.N."/>
            <person name="Totmenin A.V."/>
        </authorList>
    </citation>
    <scope>NUCLEOTIDE SEQUENCE [GENOMIC DNA]</scope>
</reference>
<reference key="4">
    <citation type="journal article" date="1996" name="Virus Res.">
        <title>Analysis of the nucleotide sequence of 23.8 kbp from the left terminus of the genome of variola major virus strain India-1967.</title>
        <authorList>
            <person name="Shchelkunov S.N."/>
            <person name="Totmenin A.V."/>
            <person name="Sandakhchiev L.S."/>
        </authorList>
    </citation>
    <scope>NUCLEOTIDE SEQUENCE [GENOMIC DNA]</scope>
    <source>
        <strain>India-1967</strain>
    </source>
</reference>
<protein>
    <recommendedName>
        <fullName>Semaphorin-like protein A43</fullName>
    </recommendedName>
</protein>
<organism>
    <name type="scientific">Variola virus (isolate Human/India/Ind3/1967)</name>
    <name type="common">VARV</name>
    <name type="synonym">Smallpox virus</name>
    <dbReference type="NCBI Taxonomy" id="587200"/>
    <lineage>
        <taxon>Viruses</taxon>
        <taxon>Varidnaviria</taxon>
        <taxon>Bamfordvirae</taxon>
        <taxon>Nucleocytoviricota</taxon>
        <taxon>Pokkesviricetes</taxon>
        <taxon>Chitovirales</taxon>
        <taxon>Poxviridae</taxon>
        <taxon>Chordopoxvirinae</taxon>
        <taxon>Orthopoxvirus</taxon>
        <taxon>Variola virus</taxon>
    </lineage>
</organism>